<evidence type="ECO:0000305" key="1"/>
<protein>
    <recommendedName>
        <fullName>Capsid protein</fullName>
    </recommendedName>
    <alternativeName>
        <fullName>Coat protein</fullName>
        <shortName>CP</shortName>
    </alternativeName>
</protein>
<accession>P54890</accession>
<comment type="subcellular location">
    <subcellularLocation>
        <location evidence="1">Virion</location>
    </subcellularLocation>
</comment>
<dbReference type="EMBL" id="D14996">
    <property type="protein sequence ID" value="BAA03643.1"/>
    <property type="molecule type" value="Genomic_RNA"/>
</dbReference>
<dbReference type="PIR" id="JQ2185">
    <property type="entry name" value="JQ2185"/>
</dbReference>
<dbReference type="Proteomes" id="UP000000397">
    <property type="component" value="Genome"/>
</dbReference>
<dbReference type="GO" id="GO:0019029">
    <property type="term" value="C:helical viral capsid"/>
    <property type="evidence" value="ECO:0007669"/>
    <property type="project" value="UniProtKB-KW"/>
</dbReference>
<dbReference type="InterPro" id="IPR008879">
    <property type="entry name" value="Coat_protein_tricho/vitivirus"/>
</dbReference>
<dbReference type="Pfam" id="PF05892">
    <property type="entry name" value="Tricho_coat"/>
    <property type="match status" value="1"/>
</dbReference>
<dbReference type="PIRSF" id="PIRSF004075">
    <property type="entry name" value="Coat_protein_tricho/vitivirus"/>
    <property type="match status" value="1"/>
</dbReference>
<proteinExistence type="predicted"/>
<reference key="1">
    <citation type="journal article" date="1993" name="J. Gen. Virol.">
        <title>Complete nucleotide sequence of the genome of an apple isolate of apple chlorotic leaf spot virus.</title>
        <authorList>
            <person name="Sato K."/>
            <person name="Yoshikawa N."/>
            <person name="Takahashi T."/>
        </authorList>
    </citation>
    <scope>NUCLEOTIDE SEQUENCE [GENOMIC RNA]</scope>
</reference>
<feature type="chain" id="PRO_0000222539" description="Capsid protein">
    <location>
        <begin position="1"/>
        <end position="193"/>
    </location>
</feature>
<organism>
    <name type="scientific">Apple chlorotic leaf spot virus (isolate apple)</name>
    <name type="common">ACLSV</name>
    <dbReference type="NCBI Taxonomy" id="73472"/>
    <lineage>
        <taxon>Viruses</taxon>
        <taxon>Riboviria</taxon>
        <taxon>Orthornavirae</taxon>
        <taxon>Kitrinoviricota</taxon>
        <taxon>Alsuviricetes</taxon>
        <taxon>Tymovirales</taxon>
        <taxon>Betaflexiviridae</taxon>
        <taxon>Trivirinae</taxon>
        <taxon>Trichovirus</taxon>
        <taxon>Trichovirus mali</taxon>
    </lineage>
</organism>
<organismHost>
    <name type="scientific">Crataegus</name>
    <name type="common">hawthorn</name>
    <dbReference type="NCBI Taxonomy" id="23159"/>
</organismHost>
<organismHost>
    <name type="scientific">Cydonia oblonga</name>
    <name type="common">Quince</name>
    <name type="synonym">Pyrus cydonia</name>
    <dbReference type="NCBI Taxonomy" id="36610"/>
</organismHost>
<organismHost>
    <name type="scientific">Malus sylvestris</name>
    <name type="common">European crab apple</name>
    <dbReference type="NCBI Taxonomy" id="3752"/>
</organismHost>
<organismHost>
    <name type="scientific">Prunus armeniaca</name>
    <name type="common">Apricot</name>
    <name type="synonym">Armeniaca vulgaris</name>
    <dbReference type="NCBI Taxonomy" id="36596"/>
</organismHost>
<organismHost>
    <name type="scientific">Prunus domestica</name>
    <name type="common">Garden plum</name>
    <dbReference type="NCBI Taxonomy" id="3758"/>
</organismHost>
<organismHost>
    <name type="scientific">Prunus persica</name>
    <name type="common">Peach</name>
    <name type="synonym">Amygdalus persica</name>
    <dbReference type="NCBI Taxonomy" id="3760"/>
</organismHost>
<organismHost>
    <name type="scientific">Prunus spinosa</name>
    <name type="common">Blackthorn</name>
    <name type="synonym">Prunus domestica var. spinosa</name>
    <dbReference type="NCBI Taxonomy" id="114937"/>
</organismHost>
<organismHost>
    <name type="scientific">Pyrus communis</name>
    <name type="common">Pear</name>
    <name type="synonym">Pyrus domestica</name>
    <dbReference type="NCBI Taxonomy" id="23211"/>
</organismHost>
<name>CAPSD_ACLSA</name>
<keyword id="KW-0167">Capsid protein</keyword>
<keyword id="KW-1139">Helical capsid protein</keyword>
<keyword id="KW-0946">Virion</keyword>
<sequence length="193" mass="21395">MAAVLNLQLKVDADLKAFLAAEGRPLHGKTGAILEQTLEAIFANIAIQGTSEQTEFLDVLVEVKSMEDQKVVGSFNLKEVVGLIKIFRTTSSDPNISSMTFRQVCEAFAPEARNGLVKLKYKGVFTNLFSTTPEVGGKYPELMFDFNKGLNMFIMNKAQQKVITNMNRRLLQTEFAKSENEAKMSSVTTDLCV</sequence>